<feature type="chain" id="PRO_0000462062" description="Tip attachment protein J">
    <location>
        <begin position="1"/>
        <end position="1192"/>
    </location>
</feature>
<feature type="domain" description="Fibronectin type-III 1" evidence="2">
    <location>
        <begin position="628"/>
        <end position="722"/>
    </location>
</feature>
<feature type="domain" description="Fibronectin type-III 2" evidence="2">
    <location>
        <begin position="727"/>
        <end position="821"/>
    </location>
</feature>
<sequence>MAKYMISGSKGGSKKPYVPKEMEDNLISINKIKVLLAVSDGECDPDFTLRDLYLDDVPVIASDGTVNYEGVTAEYRPGTQTQDYIQGFTDTSSEVTVARDITGDNPYVISVTNKNLSAVRIKILMPVGIKTEDNGDLVGVRVEYAVDMAIDGGSYSEVMRDVIDGKTRSGYDRSRRIDLPKFDERVLIRVKRLTPDSTSSKVTDKIKLQSYAEVVDAKFRYPLTGLVFVEFDSELFPTQIPNISIKKKWKIINVPSNYDPISREYHGSWDGTFKKAWSNNPAWVLYDLVTNQRYGLDQRELGIQIDKWSLYEAGVYCDQKVPDGKGGTEPRYLCDVVIQNQVEAYQLIRDICSIFRGMSFWNGESLSIVIDKPRDPSYVFTNENVINGDFQYTTASEKSMYTQCNVTFDDEQNMYQQDVEGVFDTEAALRFGYNPTSITAIGCTRRSEANRRGRWVLKTNLRSTTVNFATGLEGMIPSIGDVIAIADNFQSSNLTLNLSGRVMEVSGLQVFVPFKVDARPGDFIIINKPDGKPVKRTISKVSADGKTIELNIGFGFDVKPDTVFAIDRTDLALQQYVVTTISKGDDENEFTYSITAVEYDPNKYDEIDYGVNIDDRPTSIVQPDVMAAPENVKISSYSRVVQGVSVETMVVSWDKVPYASLYEMQWRKGDGNWLNTPQTANKEIEVEGIYSGNYQVRVRSVSASGNASPWSKIATATLTGKVGEPGAPINLTASDNEVFGIRVKWGMPEGSGDTAYIELHQSPDGTVENSSLLTLIPYPQYEYWHSTLPAGQVVWYRIRSVDRIGNVSSWTDFVRGMASDDVESVLGDILDKIFDTEAGQEIKENAIDSANKIKDQAQSIIQNALANDADVKWTRVQNGKRKAEYGHALELIANETEARVTQIEELRASIDGEITSSIKTVQEAIATESETRATQIQQLDSKFTKEIDGVRKDTSASISDVRQTITNESEARAQAVQQLDAKFTKEINDLDGVIKTEVEANISEVKQAIANETEARVQADQALTARFGDVESALVEKLDSWASVDSVGAKYAMKLGLTYKGQQYSAGMVMQLSQGSSGLISQILFDANRFAIMTSSTGGTFTLPFVVENNQVFINSLLVKNGSITNAMIGNVIQSNNFVQNQQGWRLDKNGIFENYGSTPGEGATKFTNEGLKVKDANGVLRVEVGRITGSW</sequence>
<dbReference type="EMBL" id="LT961732">
    <property type="status" value="NOT_ANNOTATED_CDS"/>
    <property type="molecule type" value="Genomic_DNA"/>
</dbReference>
<dbReference type="CDD" id="cd00063">
    <property type="entry name" value="FN3"/>
    <property type="match status" value="1"/>
</dbReference>
<dbReference type="Gene3D" id="2.60.40.10">
    <property type="entry name" value="Immunoglobulins"/>
    <property type="match status" value="2"/>
</dbReference>
<dbReference type="InterPro" id="IPR003961">
    <property type="entry name" value="FN3_dom"/>
</dbReference>
<dbReference type="InterPro" id="IPR036116">
    <property type="entry name" value="FN3_sf"/>
</dbReference>
<dbReference type="InterPro" id="IPR015406">
    <property type="entry name" value="GpJ_CSF"/>
</dbReference>
<dbReference type="InterPro" id="IPR055385">
    <property type="entry name" value="GpJ_HDII-ins2"/>
</dbReference>
<dbReference type="InterPro" id="IPR013783">
    <property type="entry name" value="Ig-like_fold"/>
</dbReference>
<dbReference type="InterPro" id="IPR032876">
    <property type="entry name" value="J_dom"/>
</dbReference>
<dbReference type="InterPro" id="IPR053171">
    <property type="entry name" value="Viral_Tip_Attach_Protein"/>
</dbReference>
<dbReference type="PANTHER" id="PTHR36251">
    <property type="entry name" value="FELS-1 PROPHAGE HOST SPECIFICITY PROTEIN-RELATED"/>
    <property type="match status" value="1"/>
</dbReference>
<dbReference type="PANTHER" id="PTHR36251:SF2">
    <property type="entry name" value="GIFSY-2 PROPHAGE HOST SPECIFICITY PROTEIN J, PHAGE LAMBDA"/>
    <property type="match status" value="1"/>
</dbReference>
<dbReference type="Pfam" id="PF24801">
    <property type="entry name" value="FNIII-A_GpJ"/>
    <property type="match status" value="1"/>
</dbReference>
<dbReference type="Pfam" id="PF13550">
    <property type="entry name" value="Phage-tail_3"/>
    <property type="match status" value="1"/>
</dbReference>
<dbReference type="Pfam" id="PF09327">
    <property type="entry name" value="Phage_Tail_Tip"/>
    <property type="match status" value="1"/>
</dbReference>
<dbReference type="SUPFAM" id="SSF49265">
    <property type="entry name" value="Fibronectin type III"/>
    <property type="match status" value="1"/>
</dbReference>
<dbReference type="PROSITE" id="PS50853">
    <property type="entry name" value="FN3"/>
    <property type="match status" value="2"/>
</dbReference>
<name>TIPJ_BPS27</name>
<evidence type="ECO:0000250" key="1">
    <source>
        <dbReference type="UniProtKB" id="P03749"/>
    </source>
</evidence>
<evidence type="ECO:0000255" key="2">
    <source>
        <dbReference type="PROSITE-ProRule" id="PRU00316"/>
    </source>
</evidence>
<evidence type="ECO:0000269" key="3">
    <source>
    </source>
</evidence>
<evidence type="ECO:0000303" key="4">
    <source>
    </source>
</evidence>
<evidence type="ECO:0000305" key="5"/>
<evidence type="ECO:0000305" key="6">
    <source>
    </source>
</evidence>
<comment type="function">
    <text evidence="1">Attaches the virion to the host receptor, inducing viral DNA ejection. During tail assembly, initiates distal tail tip assembly. During virus entry in host cell, strongly binds to host receptor in an irreversible attachment. The binding induces structural changes in the tail leading to viral DNA injection.</text>
</comment>
<comment type="subunit">
    <text evidence="6">Homotrimer (PubMed:39020165).</text>
</comment>
<comment type="subcellular location">
    <subcellularLocation>
        <location evidence="3">Virion</location>
    </subcellularLocation>
    <subcellularLocation>
        <location evidence="5">Host cytoplasm</location>
    </subcellularLocation>
    <text evidence="3">Ubiquitinated protein is found at the tip of the viral tail.</text>
</comment>
<comment type="PTM">
    <text evidence="3">Ubiquitinated by the Bil antiviral defense system; about 20% of CTF is ubiqutinated when the Bil system is expressed in E.coli MG1655 and infected with this virus, or when this protein is expressed in a strain with the Bil system.</text>
</comment>
<comment type="similarity">
    <text evidence="5">Belongs to the Caudoviricetes tip attachment protein J family.</text>
</comment>
<reference key="1">
    <citation type="journal article" date="2018" name="Science">
        <title>Systematic discovery of antiphage defense systems in the microbial pangenome.</title>
        <authorList>
            <person name="Doron S."/>
            <person name="Melamed S."/>
            <person name="Ofir G."/>
            <person name="Leavitt A."/>
            <person name="Lopatina A."/>
            <person name="Keren M."/>
            <person name="Amitai G."/>
            <person name="Sorek R."/>
        </authorList>
    </citation>
    <scope>NUCLEOTIDE SEQUENCE [LARGE SCALE GENOMIC DNA]</scope>
</reference>
<reference key="2">
    <citation type="journal article" date="2024" name="Nature">
        <title>Bacteria conjugate ubiquitin-like proteins to interfere with phage assembly.</title>
        <authorList>
            <person name="Hoer J."/>
            <person name="Wolf S.G."/>
            <person name="Sorek R."/>
        </authorList>
    </citation>
    <scope>IDENTIFICATION BY MASS SPECTROMETRY</scope>
    <scope>SUBCELLULAR LOCATION</scope>
    <scope>UBIQUITINYLATION</scope>
</reference>
<protein>
    <recommendedName>
        <fullName evidence="1">Tip attachment protein J</fullName>
    </recommendedName>
    <alternativeName>
        <fullName evidence="4">Central tail fiber</fullName>
        <shortName evidence="4">CTF</shortName>
    </alternativeName>
    <alternativeName>
        <fullName evidence="5">gpJ protein</fullName>
    </alternativeName>
</protein>
<proteinExistence type="evidence at protein level"/>
<organism>
    <name type="scientific">Escherichia phage SECphi27</name>
    <dbReference type="NCBI Taxonomy" id="2496550"/>
    <lineage>
        <taxon>Viruses</taxon>
        <taxon>Duplodnaviria</taxon>
        <taxon>Heunggongvirae</taxon>
        <taxon>Uroviricota</taxon>
        <taxon>Caudoviricetes</taxon>
        <taxon>Drexlerviridae</taxon>
        <taxon>Tempevirinae</taxon>
        <taxon>Warwickvirus</taxon>
        <taxon>Warwickvirus SECphi27</taxon>
    </lineage>
</organism>
<gene>
    <name evidence="1" type="primary">J</name>
    <name type="synonym">HOS92_gp71</name>
</gene>
<accession>P0DXX7</accession>
<keyword id="KW-1035">Host cytoplasm</keyword>
<keyword id="KW-0945">Host-virus interaction</keyword>
<keyword id="KW-0426">Late protein</keyword>
<keyword id="KW-0677">Repeat</keyword>
<keyword id="KW-0832">Ubl conjugation</keyword>
<keyword id="KW-1161">Viral attachment to host cell</keyword>
<keyword id="KW-1234">Viral attachment to host entry receptor</keyword>
<keyword id="KW-1171">Viral genome ejection through host cell envelope</keyword>
<keyword id="KW-1243">Viral long flexible tail ejection system</keyword>
<keyword id="KW-1162">Viral penetration into host cytoplasm</keyword>
<keyword id="KW-1188">Viral release from host cell</keyword>
<keyword id="KW-1245">Viral tail assembly</keyword>
<keyword id="KW-1227">Viral tail protein</keyword>
<keyword id="KW-0946">Virion</keyword>
<keyword id="KW-1160">Virus entry into host cell</keyword>